<organism>
    <name type="scientific">Escherichia coli (strain K12 / DH10B)</name>
    <dbReference type="NCBI Taxonomy" id="316385"/>
    <lineage>
        <taxon>Bacteria</taxon>
        <taxon>Pseudomonadati</taxon>
        <taxon>Pseudomonadota</taxon>
        <taxon>Gammaproteobacteria</taxon>
        <taxon>Enterobacterales</taxon>
        <taxon>Enterobacteriaceae</taxon>
        <taxon>Escherichia</taxon>
    </lineage>
</organism>
<reference key="1">
    <citation type="journal article" date="2008" name="J. Bacteriol.">
        <title>The complete genome sequence of Escherichia coli DH10B: insights into the biology of a laboratory workhorse.</title>
        <authorList>
            <person name="Durfee T."/>
            <person name="Nelson R."/>
            <person name="Baldwin S."/>
            <person name="Plunkett G. III"/>
            <person name="Burland V."/>
            <person name="Mau B."/>
            <person name="Petrosino J.F."/>
            <person name="Qin X."/>
            <person name="Muzny D.M."/>
            <person name="Ayele M."/>
            <person name="Gibbs R.A."/>
            <person name="Csorgo B."/>
            <person name="Posfai G."/>
            <person name="Weinstock G.M."/>
            <person name="Blattner F.R."/>
        </authorList>
    </citation>
    <scope>NUCLEOTIDE SEQUENCE [LARGE SCALE GENOMIC DNA]</scope>
    <source>
        <strain>K12 / DH10B</strain>
    </source>
</reference>
<keyword id="KW-0007">Acetylation</keyword>
<keyword id="KW-0067">ATP-binding</keyword>
<keyword id="KW-0963">Cytoplasm</keyword>
<keyword id="KW-0210">Decarboxylase</keyword>
<keyword id="KW-0312">Gluconeogenesis</keyword>
<keyword id="KW-0456">Lyase</keyword>
<keyword id="KW-0464">Manganese</keyword>
<keyword id="KW-0479">Metal-binding</keyword>
<keyword id="KW-0547">Nucleotide-binding</keyword>
<comment type="function">
    <text evidence="1">Involved in the gluconeogenesis. Catalyzes the conversion of oxaloacetate (OAA) to phosphoenolpyruvate (PEP) through direct phosphoryl transfer between the nucleoside triphosphate and OAA.</text>
</comment>
<comment type="catalytic activity">
    <reaction evidence="1">
        <text>oxaloacetate + ATP = phosphoenolpyruvate + ADP + CO2</text>
        <dbReference type="Rhea" id="RHEA:18617"/>
        <dbReference type="ChEBI" id="CHEBI:16452"/>
        <dbReference type="ChEBI" id="CHEBI:16526"/>
        <dbReference type="ChEBI" id="CHEBI:30616"/>
        <dbReference type="ChEBI" id="CHEBI:58702"/>
        <dbReference type="ChEBI" id="CHEBI:456216"/>
        <dbReference type="EC" id="4.1.1.49"/>
    </reaction>
</comment>
<comment type="cofactor">
    <cofactor evidence="1">
        <name>Mn(2+)</name>
        <dbReference type="ChEBI" id="CHEBI:29035"/>
    </cofactor>
    <text evidence="1">Binds 1 Mn(2+) ion per subunit.</text>
</comment>
<comment type="pathway">
    <text evidence="1">Carbohydrate biosynthesis; gluconeogenesis.</text>
</comment>
<comment type="subunit">
    <text evidence="1">Monomer.</text>
</comment>
<comment type="subcellular location">
    <subcellularLocation>
        <location evidence="1">Cytoplasm</location>
    </subcellularLocation>
</comment>
<comment type="similarity">
    <text evidence="1">Belongs to the phosphoenolpyruvate carboxykinase (ATP) family.</text>
</comment>
<sequence length="540" mass="59643">MRVNNGLTPQELEAYGISDVHDIVYNPSYDLLYQEELDPSLTGYERGVLTNLGAVAVDTGIFTGRSPKDKYIVRDDTTRDTFWWADKGKGKNDNKPLSPETWQHLKGLVTRQLSGKRLFVVDAFCGANPDTRLSVRFITEVAWQAHFVKNMFIRPSDEELAGFKPDFIVMNGAKCTNPQWKEQGLNSENFVAFNLTERMQLIGGTWYGGEMKKGMFSMMNYLLPLKGIASMHCSANVGEKGDVAVFFGLSGTGKTTLSTDPKRRLIGDDEHGWDDDGVFNFEGGCYAKTIKLSKEAEPEIYNAIRRDALLENVTVREDGTIDFDDGSKTENTRVSYPIYHIDNIVKPVSKAGHATKVIFLTADAFGVLPPVSRLTADQTQYHFLSGFTAKLAGTERGITEPTPTFSACFGAAFLSLHPTQYAEVLVKRMQAAGAQAYLVNTGWNGTGKRISIKDTRAIIDAILNGSLDNAETFTLPMFNLAIPTELPGVDTKILDPRNTYASPEQWQEKAETLAKLFIDNFDKYTDTPAGAALVAAGPKL</sequence>
<dbReference type="EC" id="4.1.1.49" evidence="1"/>
<dbReference type="EMBL" id="CP000948">
    <property type="protein sequence ID" value="ACB04462.1"/>
    <property type="molecule type" value="Genomic_DNA"/>
</dbReference>
<dbReference type="RefSeq" id="WP_001265681.1">
    <property type="nucleotide sequence ID" value="NC_010473.1"/>
</dbReference>
<dbReference type="SMR" id="B1X750"/>
<dbReference type="KEGG" id="ecd:ECDH10B_3578"/>
<dbReference type="HOGENOM" id="CLU_018247_0_1_6"/>
<dbReference type="UniPathway" id="UPA00138"/>
<dbReference type="GO" id="GO:0005829">
    <property type="term" value="C:cytosol"/>
    <property type="evidence" value="ECO:0007669"/>
    <property type="project" value="TreeGrafter"/>
</dbReference>
<dbReference type="GO" id="GO:0005524">
    <property type="term" value="F:ATP binding"/>
    <property type="evidence" value="ECO:0007669"/>
    <property type="project" value="UniProtKB-UniRule"/>
</dbReference>
<dbReference type="GO" id="GO:0046872">
    <property type="term" value="F:metal ion binding"/>
    <property type="evidence" value="ECO:0007669"/>
    <property type="project" value="UniProtKB-KW"/>
</dbReference>
<dbReference type="GO" id="GO:0004612">
    <property type="term" value="F:phosphoenolpyruvate carboxykinase (ATP) activity"/>
    <property type="evidence" value="ECO:0007669"/>
    <property type="project" value="UniProtKB-UniRule"/>
</dbReference>
<dbReference type="GO" id="GO:0006094">
    <property type="term" value="P:gluconeogenesis"/>
    <property type="evidence" value="ECO:0007669"/>
    <property type="project" value="UniProtKB-UniRule"/>
</dbReference>
<dbReference type="CDD" id="cd00484">
    <property type="entry name" value="PEPCK_ATP"/>
    <property type="match status" value="1"/>
</dbReference>
<dbReference type="FunFam" id="2.170.8.10:FF:000001">
    <property type="entry name" value="Phosphoenolpyruvate carboxykinase (ATP)"/>
    <property type="match status" value="1"/>
</dbReference>
<dbReference type="FunFam" id="3.40.449.10:FF:000001">
    <property type="entry name" value="Phosphoenolpyruvate carboxykinase (ATP)"/>
    <property type="match status" value="1"/>
</dbReference>
<dbReference type="Gene3D" id="3.90.228.20">
    <property type="match status" value="1"/>
</dbReference>
<dbReference type="Gene3D" id="3.40.449.10">
    <property type="entry name" value="Phosphoenolpyruvate Carboxykinase, domain 1"/>
    <property type="match status" value="1"/>
</dbReference>
<dbReference type="Gene3D" id="2.170.8.10">
    <property type="entry name" value="Phosphoenolpyruvate Carboxykinase, domain 2"/>
    <property type="match status" value="1"/>
</dbReference>
<dbReference type="HAMAP" id="MF_00453">
    <property type="entry name" value="PEPCK_ATP"/>
    <property type="match status" value="1"/>
</dbReference>
<dbReference type="InterPro" id="IPR001272">
    <property type="entry name" value="PEP_carboxykinase_ATP"/>
</dbReference>
<dbReference type="InterPro" id="IPR013035">
    <property type="entry name" value="PEP_carboxykinase_C"/>
</dbReference>
<dbReference type="InterPro" id="IPR008210">
    <property type="entry name" value="PEP_carboxykinase_N"/>
</dbReference>
<dbReference type="InterPro" id="IPR015994">
    <property type="entry name" value="PEPCK_ATP_CS"/>
</dbReference>
<dbReference type="NCBIfam" id="TIGR00224">
    <property type="entry name" value="pckA"/>
    <property type="match status" value="1"/>
</dbReference>
<dbReference type="NCBIfam" id="NF006819">
    <property type="entry name" value="PRK09344.1-1"/>
    <property type="match status" value="1"/>
</dbReference>
<dbReference type="NCBIfam" id="NF006820">
    <property type="entry name" value="PRK09344.1-2"/>
    <property type="match status" value="1"/>
</dbReference>
<dbReference type="NCBIfam" id="NF006821">
    <property type="entry name" value="PRK09344.1-3"/>
    <property type="match status" value="1"/>
</dbReference>
<dbReference type="PANTHER" id="PTHR30031:SF0">
    <property type="entry name" value="PHOSPHOENOLPYRUVATE CARBOXYKINASE (ATP)"/>
    <property type="match status" value="1"/>
</dbReference>
<dbReference type="PANTHER" id="PTHR30031">
    <property type="entry name" value="PHOSPHOENOLPYRUVATE CARBOXYKINASE ATP"/>
    <property type="match status" value="1"/>
</dbReference>
<dbReference type="Pfam" id="PF01293">
    <property type="entry name" value="PEPCK_ATP"/>
    <property type="match status" value="1"/>
</dbReference>
<dbReference type="PIRSF" id="PIRSF006294">
    <property type="entry name" value="PEP_crbxkin"/>
    <property type="match status" value="1"/>
</dbReference>
<dbReference type="SUPFAM" id="SSF68923">
    <property type="entry name" value="PEP carboxykinase N-terminal domain"/>
    <property type="match status" value="1"/>
</dbReference>
<dbReference type="SUPFAM" id="SSF53795">
    <property type="entry name" value="PEP carboxykinase-like"/>
    <property type="match status" value="1"/>
</dbReference>
<dbReference type="PROSITE" id="PS00532">
    <property type="entry name" value="PEPCK_ATP"/>
    <property type="match status" value="1"/>
</dbReference>
<gene>
    <name evidence="1" type="primary">pckA</name>
    <name type="ordered locus">ECDH10B_3578</name>
</gene>
<name>PCKA_ECODH</name>
<feature type="chain" id="PRO_1000125064" description="Phosphoenolpyruvate carboxykinase (ATP)">
    <location>
        <begin position="1"/>
        <end position="540"/>
    </location>
</feature>
<feature type="binding site" evidence="1">
    <location>
        <position position="65"/>
    </location>
    <ligand>
        <name>substrate</name>
    </ligand>
</feature>
<feature type="binding site" evidence="1">
    <location>
        <position position="207"/>
    </location>
    <ligand>
        <name>substrate</name>
    </ligand>
</feature>
<feature type="binding site" evidence="1">
    <location>
        <position position="213"/>
    </location>
    <ligand>
        <name>ATP</name>
        <dbReference type="ChEBI" id="CHEBI:30616"/>
    </ligand>
</feature>
<feature type="binding site" evidence="1">
    <location>
        <position position="213"/>
    </location>
    <ligand>
        <name>Mn(2+)</name>
        <dbReference type="ChEBI" id="CHEBI:29035"/>
    </ligand>
</feature>
<feature type="binding site" evidence="1">
    <location>
        <position position="213"/>
    </location>
    <ligand>
        <name>substrate</name>
    </ligand>
</feature>
<feature type="binding site" evidence="1">
    <location>
        <position position="232"/>
    </location>
    <ligand>
        <name>ATP</name>
        <dbReference type="ChEBI" id="CHEBI:30616"/>
    </ligand>
</feature>
<feature type="binding site" evidence="1">
    <location>
        <position position="232"/>
    </location>
    <ligand>
        <name>Mn(2+)</name>
        <dbReference type="ChEBI" id="CHEBI:29035"/>
    </ligand>
</feature>
<feature type="binding site" evidence="1">
    <location>
        <begin position="248"/>
        <end position="256"/>
    </location>
    <ligand>
        <name>ATP</name>
        <dbReference type="ChEBI" id="CHEBI:30616"/>
    </ligand>
</feature>
<feature type="binding site" evidence="1">
    <location>
        <position position="269"/>
    </location>
    <ligand>
        <name>Mn(2+)</name>
        <dbReference type="ChEBI" id="CHEBI:29035"/>
    </ligand>
</feature>
<feature type="binding site" evidence="1">
    <location>
        <position position="297"/>
    </location>
    <ligand>
        <name>ATP</name>
        <dbReference type="ChEBI" id="CHEBI:30616"/>
    </ligand>
</feature>
<feature type="binding site" evidence="1">
    <location>
        <position position="333"/>
    </location>
    <ligand>
        <name>ATP</name>
        <dbReference type="ChEBI" id="CHEBI:30616"/>
    </ligand>
</feature>
<feature type="binding site" evidence="1">
    <location>
        <position position="333"/>
    </location>
    <ligand>
        <name>substrate</name>
    </ligand>
</feature>
<feature type="binding site" evidence="1">
    <location>
        <begin position="449"/>
        <end position="450"/>
    </location>
    <ligand>
        <name>ATP</name>
        <dbReference type="ChEBI" id="CHEBI:30616"/>
    </ligand>
</feature>
<feature type="binding site" evidence="1">
    <location>
        <position position="455"/>
    </location>
    <ligand>
        <name>ATP</name>
        <dbReference type="ChEBI" id="CHEBI:30616"/>
    </ligand>
</feature>
<feature type="modified residue" description="N6-acetyllysine" evidence="1">
    <location>
        <position position="87"/>
    </location>
</feature>
<feature type="modified residue" description="N6-acetyllysine" evidence="1">
    <location>
        <position position="523"/>
    </location>
</feature>
<accession>B1X750</accession>
<evidence type="ECO:0000255" key="1">
    <source>
        <dbReference type="HAMAP-Rule" id="MF_00453"/>
    </source>
</evidence>
<proteinExistence type="inferred from homology"/>
<protein>
    <recommendedName>
        <fullName evidence="1">Phosphoenolpyruvate carboxykinase (ATP)</fullName>
        <shortName evidence="1">PCK</shortName>
        <shortName evidence="1">PEP carboxykinase</shortName>
        <shortName evidence="1">PEPCK</shortName>
        <ecNumber evidence="1">4.1.1.49</ecNumber>
    </recommendedName>
</protein>